<dbReference type="EC" id="3.2.-.-"/>
<dbReference type="EMBL" id="D83967">
    <property type="protein sequence ID" value="BAA23403.1"/>
    <property type="molecule type" value="Genomic_DNA"/>
</dbReference>
<dbReference type="EMBL" id="AL009126">
    <property type="protein sequence ID" value="CAB12614.1"/>
    <property type="molecule type" value="Genomic_DNA"/>
</dbReference>
<dbReference type="PIR" id="H69808">
    <property type="entry name" value="H69808"/>
</dbReference>
<dbReference type="RefSeq" id="WP_003243504.1">
    <property type="nucleotide sequence ID" value="NZ_OZ025638.1"/>
</dbReference>
<dbReference type="SMR" id="P80876"/>
<dbReference type="FunCoup" id="P80876">
    <property type="interactions" value="451"/>
</dbReference>
<dbReference type="STRING" id="224308.BSU07850"/>
<dbReference type="MEROPS" id="C56.001"/>
<dbReference type="PaxDb" id="224308-BSU07850"/>
<dbReference type="EnsemblBacteria" id="CAB12614">
    <property type="protein sequence ID" value="CAB12614"/>
    <property type="gene ID" value="BSU_07850"/>
</dbReference>
<dbReference type="GeneID" id="938808"/>
<dbReference type="KEGG" id="bsu:BSU07850"/>
<dbReference type="PATRIC" id="fig|224308.179.peg.849"/>
<dbReference type="eggNOG" id="COG0693">
    <property type="taxonomic scope" value="Bacteria"/>
</dbReference>
<dbReference type="InParanoid" id="P80876"/>
<dbReference type="OrthoDB" id="9792284at2"/>
<dbReference type="PhylomeDB" id="P80876"/>
<dbReference type="BioCyc" id="BSUB:BSU07850-MONOMER"/>
<dbReference type="Proteomes" id="UP000001570">
    <property type="component" value="Chromosome"/>
</dbReference>
<dbReference type="GO" id="GO:0008233">
    <property type="term" value="F:peptidase activity"/>
    <property type="evidence" value="ECO:0007669"/>
    <property type="project" value="UniProtKB-KW"/>
</dbReference>
<dbReference type="GO" id="GO:0006508">
    <property type="term" value="P:proteolysis"/>
    <property type="evidence" value="ECO:0007669"/>
    <property type="project" value="UniProtKB-KW"/>
</dbReference>
<dbReference type="CDD" id="cd03134">
    <property type="entry name" value="GATase1_PfpI_like"/>
    <property type="match status" value="1"/>
</dbReference>
<dbReference type="Gene3D" id="3.40.50.880">
    <property type="match status" value="1"/>
</dbReference>
<dbReference type="InterPro" id="IPR006286">
    <property type="entry name" value="C56_PfpI-like"/>
</dbReference>
<dbReference type="InterPro" id="IPR029062">
    <property type="entry name" value="Class_I_gatase-like"/>
</dbReference>
<dbReference type="InterPro" id="IPR002818">
    <property type="entry name" value="DJ-1/PfpI"/>
</dbReference>
<dbReference type="NCBIfam" id="TIGR01382">
    <property type="entry name" value="PfpI"/>
    <property type="match status" value="1"/>
</dbReference>
<dbReference type="PANTHER" id="PTHR42733">
    <property type="entry name" value="DJ-1 PROTEIN"/>
    <property type="match status" value="1"/>
</dbReference>
<dbReference type="PANTHER" id="PTHR42733:SF2">
    <property type="entry name" value="DJ-1_THIJ_PFPI FAMILY PROTEIN"/>
    <property type="match status" value="1"/>
</dbReference>
<dbReference type="Pfam" id="PF01965">
    <property type="entry name" value="DJ-1_PfpI"/>
    <property type="match status" value="1"/>
</dbReference>
<dbReference type="SUPFAM" id="SSF52317">
    <property type="entry name" value="Class I glutamine amidotransferase-like"/>
    <property type="match status" value="1"/>
</dbReference>
<dbReference type="PROSITE" id="PS51276">
    <property type="entry name" value="PEPTIDASE_C56_PFPI"/>
    <property type="match status" value="1"/>
</dbReference>
<keyword id="KW-0903">Direct protein sequencing</keyword>
<keyword id="KW-0378">Hydrolase</keyword>
<keyword id="KW-0645">Protease</keyword>
<keyword id="KW-1185">Reference proteome</keyword>
<keyword id="KW-0346">Stress response</keyword>
<name>GS18_BACSU</name>
<reference key="1">
    <citation type="journal article" date="1996" name="Microbiology">
        <title>Cloning and sequencing of a 40.6 kb segment in the 73 degrees-76 degrees region of the Bacillus subtilis chromosome containing genes for trehalose metabolism and acetoin utilization.</title>
        <authorList>
            <person name="Yamamoto H."/>
            <person name="Uchiyama S."/>
            <person name="Sekiguchi J."/>
        </authorList>
    </citation>
    <scope>NUCLEOTIDE SEQUENCE [GENOMIC DNA]</scope>
    <source>
        <strain>168 / AC327</strain>
    </source>
</reference>
<reference key="2">
    <citation type="journal article" date="1997" name="Nature">
        <title>The complete genome sequence of the Gram-positive bacterium Bacillus subtilis.</title>
        <authorList>
            <person name="Kunst F."/>
            <person name="Ogasawara N."/>
            <person name="Moszer I."/>
            <person name="Albertini A.M."/>
            <person name="Alloni G."/>
            <person name="Azevedo V."/>
            <person name="Bertero M.G."/>
            <person name="Bessieres P."/>
            <person name="Bolotin A."/>
            <person name="Borchert S."/>
            <person name="Borriss R."/>
            <person name="Boursier L."/>
            <person name="Brans A."/>
            <person name="Braun M."/>
            <person name="Brignell S.C."/>
            <person name="Bron S."/>
            <person name="Brouillet S."/>
            <person name="Bruschi C.V."/>
            <person name="Caldwell B."/>
            <person name="Capuano V."/>
            <person name="Carter N.M."/>
            <person name="Choi S.-K."/>
            <person name="Codani J.-J."/>
            <person name="Connerton I.F."/>
            <person name="Cummings N.J."/>
            <person name="Daniel R.A."/>
            <person name="Denizot F."/>
            <person name="Devine K.M."/>
            <person name="Duesterhoeft A."/>
            <person name="Ehrlich S.D."/>
            <person name="Emmerson P.T."/>
            <person name="Entian K.-D."/>
            <person name="Errington J."/>
            <person name="Fabret C."/>
            <person name="Ferrari E."/>
            <person name="Foulger D."/>
            <person name="Fritz C."/>
            <person name="Fujita M."/>
            <person name="Fujita Y."/>
            <person name="Fuma S."/>
            <person name="Galizzi A."/>
            <person name="Galleron N."/>
            <person name="Ghim S.-Y."/>
            <person name="Glaser P."/>
            <person name="Goffeau A."/>
            <person name="Golightly E.J."/>
            <person name="Grandi G."/>
            <person name="Guiseppi G."/>
            <person name="Guy B.J."/>
            <person name="Haga K."/>
            <person name="Haiech J."/>
            <person name="Harwood C.R."/>
            <person name="Henaut A."/>
            <person name="Hilbert H."/>
            <person name="Holsappel S."/>
            <person name="Hosono S."/>
            <person name="Hullo M.-F."/>
            <person name="Itaya M."/>
            <person name="Jones L.-M."/>
            <person name="Joris B."/>
            <person name="Karamata D."/>
            <person name="Kasahara Y."/>
            <person name="Klaerr-Blanchard M."/>
            <person name="Klein C."/>
            <person name="Kobayashi Y."/>
            <person name="Koetter P."/>
            <person name="Koningstein G."/>
            <person name="Krogh S."/>
            <person name="Kumano M."/>
            <person name="Kurita K."/>
            <person name="Lapidus A."/>
            <person name="Lardinois S."/>
            <person name="Lauber J."/>
            <person name="Lazarevic V."/>
            <person name="Lee S.-M."/>
            <person name="Levine A."/>
            <person name="Liu H."/>
            <person name="Masuda S."/>
            <person name="Mauel C."/>
            <person name="Medigue C."/>
            <person name="Medina N."/>
            <person name="Mellado R.P."/>
            <person name="Mizuno M."/>
            <person name="Moestl D."/>
            <person name="Nakai S."/>
            <person name="Noback M."/>
            <person name="Noone D."/>
            <person name="O'Reilly M."/>
            <person name="Ogawa K."/>
            <person name="Ogiwara A."/>
            <person name="Oudega B."/>
            <person name="Park S.-H."/>
            <person name="Parro V."/>
            <person name="Pohl T.M."/>
            <person name="Portetelle D."/>
            <person name="Porwollik S."/>
            <person name="Prescott A.M."/>
            <person name="Presecan E."/>
            <person name="Pujic P."/>
            <person name="Purnelle B."/>
            <person name="Rapoport G."/>
            <person name="Rey M."/>
            <person name="Reynolds S."/>
            <person name="Rieger M."/>
            <person name="Rivolta C."/>
            <person name="Rocha E."/>
            <person name="Roche B."/>
            <person name="Rose M."/>
            <person name="Sadaie Y."/>
            <person name="Sato T."/>
            <person name="Scanlan E."/>
            <person name="Schleich S."/>
            <person name="Schroeter R."/>
            <person name="Scoffone F."/>
            <person name="Sekiguchi J."/>
            <person name="Sekowska A."/>
            <person name="Seror S.J."/>
            <person name="Serror P."/>
            <person name="Shin B.-S."/>
            <person name="Soldo B."/>
            <person name="Sorokin A."/>
            <person name="Tacconi E."/>
            <person name="Takagi T."/>
            <person name="Takahashi H."/>
            <person name="Takemaru K."/>
            <person name="Takeuchi M."/>
            <person name="Tamakoshi A."/>
            <person name="Tanaka T."/>
            <person name="Terpstra P."/>
            <person name="Tognoni A."/>
            <person name="Tosato V."/>
            <person name="Uchiyama S."/>
            <person name="Vandenbol M."/>
            <person name="Vannier F."/>
            <person name="Vassarotti A."/>
            <person name="Viari A."/>
            <person name="Wambutt R."/>
            <person name="Wedler E."/>
            <person name="Wedler H."/>
            <person name="Weitzenegger T."/>
            <person name="Winters P."/>
            <person name="Wipat A."/>
            <person name="Yamamoto H."/>
            <person name="Yamane K."/>
            <person name="Yasumoto K."/>
            <person name="Yata K."/>
            <person name="Yoshida K."/>
            <person name="Yoshikawa H.-F."/>
            <person name="Zumstein E."/>
            <person name="Yoshikawa H."/>
            <person name="Danchin A."/>
        </authorList>
    </citation>
    <scope>NUCLEOTIDE SEQUENCE [LARGE SCALE GENOMIC DNA]</scope>
    <source>
        <strain>168</strain>
    </source>
</reference>
<reference key="3">
    <citation type="journal article" date="1997" name="Electrophoresis">
        <title>First steps from a two-dimensional protein index towards a response-regulation map for Bacillus subtilis.</title>
        <authorList>
            <person name="Antelmann H."/>
            <person name="Bernhardt J."/>
            <person name="Schmid R."/>
            <person name="Mach H."/>
            <person name="Voelker U."/>
            <person name="Hecker M."/>
        </authorList>
    </citation>
    <scope>PROTEIN SEQUENCE OF 2-30</scope>
    <source>
        <strain>168 / IS58</strain>
    </source>
</reference>
<reference key="4">
    <citation type="journal article" date="2009" name="Mol. Microbiol.">
        <title>Genome-wide responses to carbonyl electrophiles in Bacillus subtilis: control of the thiol-dependent formaldehyde dehydrogenase AdhA and cysteine proteinase YraA by the MerR-family regulator YraB (AdhR).</title>
        <authorList>
            <person name="Nguyen T.T.H."/>
            <person name="Eiamphungporn W."/>
            <person name="Maeder U."/>
            <person name="Liebeke M."/>
            <person name="Lalk M."/>
            <person name="Hecker M."/>
            <person name="Helmann J.D."/>
            <person name="Antelmann H."/>
        </authorList>
    </citation>
    <scope>FUNCTION</scope>
    <scope>DISRUPTION PHENOTYPE</scope>
    <source>
        <strain>168</strain>
    </source>
</reference>
<proteinExistence type="evidence at protein level"/>
<accession>P80876</accession>
<organism>
    <name type="scientific">Bacillus subtilis (strain 168)</name>
    <dbReference type="NCBI Taxonomy" id="224308"/>
    <lineage>
        <taxon>Bacteria</taxon>
        <taxon>Bacillati</taxon>
        <taxon>Bacillota</taxon>
        <taxon>Bacilli</taxon>
        <taxon>Bacillales</taxon>
        <taxon>Bacillaceae</taxon>
        <taxon>Bacillus</taxon>
    </lineage>
</organism>
<protein>
    <recommendedName>
        <fullName>General stress protein 18</fullName>
        <shortName>GSP18</shortName>
        <ecNumber>3.2.-.-</ecNumber>
    </recommendedName>
</protein>
<sequence length="172" mass="18863">MGKKIAVVLTYYFEDSEYTEPAKAFKEAGHELTVIEKEKGKTVKGKQGTAEVTVDASIDDVNSSDFDALLIPGGFSPDQLRADDRFVQFTKAFMTDKKPVFAICHGPQLLINAKALDGRKATGYTSIRVDMENAGADVVDKEVVVCQDQLVTSRTPDDIPAFNRESLALLEK</sequence>
<evidence type="ECO:0000255" key="1">
    <source>
        <dbReference type="PROSITE-ProRule" id="PRU00608"/>
    </source>
</evidence>
<evidence type="ECO:0000269" key="2">
    <source>
    </source>
</evidence>
<evidence type="ECO:0000269" key="3">
    <source>
    </source>
</evidence>
<evidence type="ECO:0000305" key="4"/>
<gene>
    <name type="primary">yfkM</name>
    <name type="ordered locus">BSU07850</name>
</gene>
<feature type="initiator methionine" description="Removed" evidence="3">
    <location>
        <position position="1"/>
    </location>
</feature>
<feature type="chain" id="PRO_0000157832" description="General stress protein 18">
    <location>
        <begin position="2"/>
        <end position="172"/>
    </location>
</feature>
<feature type="domain" description="PfpI endopeptidase" evidence="1">
    <location>
        <begin position="3"/>
        <end position="171"/>
    </location>
</feature>
<feature type="active site" description="Nucleophile" evidence="1">
    <location>
        <position position="104"/>
    </location>
</feature>
<feature type="active site" evidence="1">
    <location>
        <position position="105"/>
    </location>
</feature>
<comment type="function">
    <text evidence="2">Functions in the protection against aldehyde-stress, possibly by degrading damaged proteins.</text>
</comment>
<comment type="induction">
    <text>By heat shock, salt stress, oxidative stress, glucose limitation and oxygen limitation.</text>
</comment>
<comment type="disruption phenotype">
    <text evidence="2">When combined with a yraA disruption shows significantly reduced growth in the presence of formaldehye and methylglyoxal.</text>
</comment>
<comment type="similarity">
    <text evidence="4">Belongs to the peptidase C56 family.</text>
</comment>